<name>RL18_FUSNN</name>
<evidence type="ECO:0000255" key="1">
    <source>
        <dbReference type="HAMAP-Rule" id="MF_01337"/>
    </source>
</evidence>
<evidence type="ECO:0000256" key="2">
    <source>
        <dbReference type="SAM" id="MobiDB-lite"/>
    </source>
</evidence>
<evidence type="ECO:0000305" key="3"/>
<accession>Q8RIH2</accession>
<protein>
    <recommendedName>
        <fullName evidence="1">Large ribosomal subunit protein uL18</fullName>
    </recommendedName>
    <alternativeName>
        <fullName evidence="3">50S ribosomal protein L18</fullName>
    </alternativeName>
</protein>
<sequence>MFKKVDRKASRQKKQMSIRNKISGTPERPRLSVFRSNTNIFAQLIDDVNGVTLVSASTIDKALKGSIANGGNIEAAKAVGKAIAERAKEKGIDAIVFDRSGYKYTGRVAALADAAREAGLSF</sequence>
<dbReference type="EMBL" id="AE009951">
    <property type="protein sequence ID" value="AAL93743.1"/>
    <property type="molecule type" value="Genomic_DNA"/>
</dbReference>
<dbReference type="RefSeq" id="NP_602444.1">
    <property type="nucleotide sequence ID" value="NC_003454.1"/>
</dbReference>
<dbReference type="RefSeq" id="WP_005904133.1">
    <property type="nucleotide sequence ID" value="NZ_OZ209243.1"/>
</dbReference>
<dbReference type="SMR" id="Q8RIH2"/>
<dbReference type="FunCoup" id="Q8RIH2">
    <property type="interactions" value="380"/>
</dbReference>
<dbReference type="STRING" id="190304.FN1628"/>
<dbReference type="PaxDb" id="190304-FN1628"/>
<dbReference type="EnsemblBacteria" id="AAL93743">
    <property type="protein sequence ID" value="AAL93743"/>
    <property type="gene ID" value="FN1628"/>
</dbReference>
<dbReference type="GeneID" id="79782567"/>
<dbReference type="KEGG" id="fnu:FN1628"/>
<dbReference type="PATRIC" id="fig|190304.8.peg.121"/>
<dbReference type="eggNOG" id="COG0256">
    <property type="taxonomic scope" value="Bacteria"/>
</dbReference>
<dbReference type="HOGENOM" id="CLU_098841_0_1_0"/>
<dbReference type="InParanoid" id="Q8RIH2"/>
<dbReference type="BioCyc" id="FNUC190304:G1FZS-131-MONOMER"/>
<dbReference type="Proteomes" id="UP000002521">
    <property type="component" value="Chromosome"/>
</dbReference>
<dbReference type="GO" id="GO:0022625">
    <property type="term" value="C:cytosolic large ribosomal subunit"/>
    <property type="evidence" value="ECO:0000318"/>
    <property type="project" value="GO_Central"/>
</dbReference>
<dbReference type="GO" id="GO:0008097">
    <property type="term" value="F:5S rRNA binding"/>
    <property type="evidence" value="ECO:0000318"/>
    <property type="project" value="GO_Central"/>
</dbReference>
<dbReference type="GO" id="GO:0003735">
    <property type="term" value="F:structural constituent of ribosome"/>
    <property type="evidence" value="ECO:0007669"/>
    <property type="project" value="InterPro"/>
</dbReference>
<dbReference type="GO" id="GO:0006412">
    <property type="term" value="P:translation"/>
    <property type="evidence" value="ECO:0007669"/>
    <property type="project" value="UniProtKB-UniRule"/>
</dbReference>
<dbReference type="CDD" id="cd00432">
    <property type="entry name" value="Ribosomal_L18_L5e"/>
    <property type="match status" value="1"/>
</dbReference>
<dbReference type="FunFam" id="3.30.420.100:FF:000001">
    <property type="entry name" value="50S ribosomal protein L18"/>
    <property type="match status" value="1"/>
</dbReference>
<dbReference type="Gene3D" id="3.30.420.100">
    <property type="match status" value="1"/>
</dbReference>
<dbReference type="HAMAP" id="MF_01337_B">
    <property type="entry name" value="Ribosomal_uL18_B"/>
    <property type="match status" value="1"/>
</dbReference>
<dbReference type="InterPro" id="IPR004389">
    <property type="entry name" value="Ribosomal_uL18_bac-type"/>
</dbReference>
<dbReference type="InterPro" id="IPR005484">
    <property type="entry name" value="Ribosomal_uL18_bac/euk"/>
</dbReference>
<dbReference type="NCBIfam" id="TIGR00060">
    <property type="entry name" value="L18_bact"/>
    <property type="match status" value="1"/>
</dbReference>
<dbReference type="PANTHER" id="PTHR12899">
    <property type="entry name" value="39S RIBOSOMAL PROTEIN L18, MITOCHONDRIAL"/>
    <property type="match status" value="1"/>
</dbReference>
<dbReference type="PANTHER" id="PTHR12899:SF3">
    <property type="entry name" value="LARGE RIBOSOMAL SUBUNIT PROTEIN UL18M"/>
    <property type="match status" value="1"/>
</dbReference>
<dbReference type="Pfam" id="PF00861">
    <property type="entry name" value="Ribosomal_L18p"/>
    <property type="match status" value="1"/>
</dbReference>
<dbReference type="SUPFAM" id="SSF53137">
    <property type="entry name" value="Translational machinery components"/>
    <property type="match status" value="1"/>
</dbReference>
<feature type="chain" id="PRO_0000131266" description="Large ribosomal subunit protein uL18">
    <location>
        <begin position="1"/>
        <end position="122"/>
    </location>
</feature>
<feature type="region of interest" description="Disordered" evidence="2">
    <location>
        <begin position="1"/>
        <end position="29"/>
    </location>
</feature>
<feature type="compositionally biased region" description="Basic residues" evidence="2">
    <location>
        <begin position="1"/>
        <end position="16"/>
    </location>
</feature>
<reference key="1">
    <citation type="journal article" date="2002" name="J. Bacteriol.">
        <title>Genome sequence and analysis of the oral bacterium Fusobacterium nucleatum strain ATCC 25586.</title>
        <authorList>
            <person name="Kapatral V."/>
            <person name="Anderson I."/>
            <person name="Ivanova N."/>
            <person name="Reznik G."/>
            <person name="Los T."/>
            <person name="Lykidis A."/>
            <person name="Bhattacharyya A."/>
            <person name="Bartman A."/>
            <person name="Gardner W."/>
            <person name="Grechkin G."/>
            <person name="Zhu L."/>
            <person name="Vasieva O."/>
            <person name="Chu L."/>
            <person name="Kogan Y."/>
            <person name="Chaga O."/>
            <person name="Goltsman E."/>
            <person name="Bernal A."/>
            <person name="Larsen N."/>
            <person name="D'Souza M."/>
            <person name="Walunas T."/>
            <person name="Pusch G."/>
            <person name="Haselkorn R."/>
            <person name="Fonstein M."/>
            <person name="Kyrpides N.C."/>
            <person name="Overbeek R."/>
        </authorList>
    </citation>
    <scope>NUCLEOTIDE SEQUENCE [LARGE SCALE GENOMIC DNA]</scope>
    <source>
        <strain>ATCC 25586 / DSM 15643 / BCRC 10681 / CIP 101130 / JCM 8532 / KCTC 2640 / LMG 13131 / VPI 4355</strain>
    </source>
</reference>
<gene>
    <name evidence="1" type="primary">rplR</name>
    <name type="ordered locus">FN1628</name>
</gene>
<organism>
    <name type="scientific">Fusobacterium nucleatum subsp. nucleatum (strain ATCC 25586 / DSM 15643 / BCRC 10681 / CIP 101130 / JCM 8532 / KCTC 2640 / LMG 13131 / VPI 4355)</name>
    <dbReference type="NCBI Taxonomy" id="190304"/>
    <lineage>
        <taxon>Bacteria</taxon>
        <taxon>Fusobacteriati</taxon>
        <taxon>Fusobacteriota</taxon>
        <taxon>Fusobacteriia</taxon>
        <taxon>Fusobacteriales</taxon>
        <taxon>Fusobacteriaceae</taxon>
        <taxon>Fusobacterium</taxon>
    </lineage>
</organism>
<keyword id="KW-1185">Reference proteome</keyword>
<keyword id="KW-0687">Ribonucleoprotein</keyword>
<keyword id="KW-0689">Ribosomal protein</keyword>
<keyword id="KW-0694">RNA-binding</keyword>
<keyword id="KW-0699">rRNA-binding</keyword>
<proteinExistence type="inferred from homology"/>
<comment type="function">
    <text evidence="1">This is one of the proteins that bind and probably mediate the attachment of the 5S RNA into the large ribosomal subunit, where it forms part of the central protuberance.</text>
</comment>
<comment type="subunit">
    <text evidence="1">Part of the 50S ribosomal subunit; part of the 5S rRNA/L5/L18/L25 subcomplex. Contacts the 5S and 23S rRNAs.</text>
</comment>
<comment type="similarity">
    <text evidence="1">Belongs to the universal ribosomal protein uL18 family.</text>
</comment>